<gene>
    <name type="primary">sigK</name>
    <name type="ordered locus">MUL_1400</name>
</gene>
<protein>
    <recommendedName>
        <fullName>ECF RNA polymerase sigma factor SigK</fullName>
        <shortName>ECF sigma factor SigK</shortName>
    </recommendedName>
    <alternativeName>
        <fullName>Alternative RNA polymerase sigma factor SigK</fullName>
    </alternativeName>
    <alternativeName>
        <fullName>RNA polymerase sigma-K factor</fullName>
        <shortName>Sigma-K factor</shortName>
    </alternativeName>
</protein>
<organism>
    <name type="scientific">Mycobacterium ulcerans (strain Agy99)</name>
    <dbReference type="NCBI Taxonomy" id="362242"/>
    <lineage>
        <taxon>Bacteria</taxon>
        <taxon>Bacillati</taxon>
        <taxon>Actinomycetota</taxon>
        <taxon>Actinomycetes</taxon>
        <taxon>Mycobacteriales</taxon>
        <taxon>Mycobacteriaceae</taxon>
        <taxon>Mycobacterium</taxon>
        <taxon>Mycobacterium ulcerans group</taxon>
    </lineage>
</organism>
<keyword id="KW-0238">DNA-binding</keyword>
<keyword id="KW-0731">Sigma factor</keyword>
<keyword id="KW-0804">Transcription</keyword>
<keyword id="KW-0805">Transcription regulation</keyword>
<feature type="chain" id="PRO_0000313846" description="ECF RNA polymerase sigma factor SigK">
    <location>
        <begin position="1"/>
        <end position="187"/>
    </location>
</feature>
<feature type="DNA-binding region" description="H-T-H motif" evidence="1">
    <location>
        <begin position="155"/>
        <end position="174"/>
    </location>
</feature>
<feature type="region of interest" description="Sigma-70 factor domain-2">
    <location>
        <begin position="30"/>
        <end position="96"/>
    </location>
</feature>
<feature type="region of interest" description="Sigma-70 factor domain-4">
    <location>
        <begin position="133"/>
        <end position="182"/>
    </location>
</feature>
<feature type="short sequence motif" description="Interaction with polymerase core subunit RpoC">
    <location>
        <begin position="53"/>
        <end position="56"/>
    </location>
</feature>
<proteinExistence type="inferred from homology"/>
<reference key="1">
    <citation type="journal article" date="2007" name="Genome Res.">
        <title>Reductive evolution and niche adaptation inferred from the genome of Mycobacterium ulcerans, the causative agent of Buruli ulcer.</title>
        <authorList>
            <person name="Stinear T.P."/>
            <person name="Seemann T."/>
            <person name="Pidot S."/>
            <person name="Frigui W."/>
            <person name="Reysset G."/>
            <person name="Garnier T."/>
            <person name="Meurice G."/>
            <person name="Simon D."/>
            <person name="Bouchier C."/>
            <person name="Ma L."/>
            <person name="Tichit M."/>
            <person name="Porter J.L."/>
            <person name="Ryan J."/>
            <person name="Johnson P.D.R."/>
            <person name="Davies J.K."/>
            <person name="Jenkin G.A."/>
            <person name="Small P.L.C."/>
            <person name="Jones L.M."/>
            <person name="Tekaia F."/>
            <person name="Laval F."/>
            <person name="Daffe M."/>
            <person name="Parkhill J."/>
            <person name="Cole S.T."/>
        </authorList>
    </citation>
    <scope>NUCLEOTIDE SEQUENCE [LARGE SCALE GENOMIC DNA]</scope>
    <source>
        <strain>Agy99</strain>
    </source>
</reference>
<dbReference type="EMBL" id="CP000325">
    <property type="protein sequence ID" value="ABL03943.1"/>
    <property type="molecule type" value="Genomic_DNA"/>
</dbReference>
<dbReference type="RefSeq" id="WP_011739564.1">
    <property type="nucleotide sequence ID" value="NC_008611.1"/>
</dbReference>
<dbReference type="SMR" id="A0PNM4"/>
<dbReference type="KEGG" id="mul:MUL_1400"/>
<dbReference type="eggNOG" id="COG1595">
    <property type="taxonomic scope" value="Bacteria"/>
</dbReference>
<dbReference type="HOGENOM" id="CLU_047691_9_3_11"/>
<dbReference type="Proteomes" id="UP000000765">
    <property type="component" value="Chromosome"/>
</dbReference>
<dbReference type="GO" id="GO:0003677">
    <property type="term" value="F:DNA binding"/>
    <property type="evidence" value="ECO:0007669"/>
    <property type="project" value="UniProtKB-KW"/>
</dbReference>
<dbReference type="GO" id="GO:0016987">
    <property type="term" value="F:sigma factor activity"/>
    <property type="evidence" value="ECO:0007669"/>
    <property type="project" value="UniProtKB-KW"/>
</dbReference>
<dbReference type="GO" id="GO:0006352">
    <property type="term" value="P:DNA-templated transcription initiation"/>
    <property type="evidence" value="ECO:0007669"/>
    <property type="project" value="InterPro"/>
</dbReference>
<dbReference type="CDD" id="cd06171">
    <property type="entry name" value="Sigma70_r4"/>
    <property type="match status" value="1"/>
</dbReference>
<dbReference type="Gene3D" id="1.10.1740.10">
    <property type="match status" value="1"/>
</dbReference>
<dbReference type="Gene3D" id="1.10.10.10">
    <property type="entry name" value="Winged helix-like DNA-binding domain superfamily/Winged helix DNA-binding domain"/>
    <property type="match status" value="1"/>
</dbReference>
<dbReference type="InterPro" id="IPR039425">
    <property type="entry name" value="RNA_pol_sigma-70-like"/>
</dbReference>
<dbReference type="InterPro" id="IPR014284">
    <property type="entry name" value="RNA_pol_sigma-70_dom"/>
</dbReference>
<dbReference type="InterPro" id="IPR007627">
    <property type="entry name" value="RNA_pol_sigma70_r2"/>
</dbReference>
<dbReference type="InterPro" id="IPR007630">
    <property type="entry name" value="RNA_pol_sigma70_r4"/>
</dbReference>
<dbReference type="InterPro" id="IPR013325">
    <property type="entry name" value="RNA_pol_sigma_r2"/>
</dbReference>
<dbReference type="InterPro" id="IPR013324">
    <property type="entry name" value="RNA_pol_sigma_r3/r4-like"/>
</dbReference>
<dbReference type="InterPro" id="IPR036388">
    <property type="entry name" value="WH-like_DNA-bd_sf"/>
</dbReference>
<dbReference type="NCBIfam" id="NF007228">
    <property type="entry name" value="PRK09646.1"/>
    <property type="match status" value="1"/>
</dbReference>
<dbReference type="NCBIfam" id="TIGR02937">
    <property type="entry name" value="sigma70-ECF"/>
    <property type="match status" value="1"/>
</dbReference>
<dbReference type="PANTHER" id="PTHR43133:SF66">
    <property type="entry name" value="ECF RNA POLYMERASE SIGMA FACTOR SIGK"/>
    <property type="match status" value="1"/>
</dbReference>
<dbReference type="PANTHER" id="PTHR43133">
    <property type="entry name" value="RNA POLYMERASE ECF-TYPE SIGMA FACTO"/>
    <property type="match status" value="1"/>
</dbReference>
<dbReference type="Pfam" id="PF04542">
    <property type="entry name" value="Sigma70_r2"/>
    <property type="match status" value="1"/>
</dbReference>
<dbReference type="Pfam" id="PF04545">
    <property type="entry name" value="Sigma70_r4"/>
    <property type="match status" value="1"/>
</dbReference>
<dbReference type="SUPFAM" id="SSF88946">
    <property type="entry name" value="Sigma2 domain of RNA polymerase sigma factors"/>
    <property type="match status" value="1"/>
</dbReference>
<dbReference type="SUPFAM" id="SSF88659">
    <property type="entry name" value="Sigma3 and sigma4 domains of RNA polymerase sigma factors"/>
    <property type="match status" value="1"/>
</dbReference>
<evidence type="ECO:0000250" key="1"/>
<evidence type="ECO:0000305" key="2"/>
<sequence>MTGPPGRSDDLNALLRQIARGERDAFAMFYDHTCTRVYGLVARVLRDAGYSEETTQEIYLEVWRTASDYDATKGSPLAWLLTMAHRRAVDRVRAEQAGSQRESRYGAANVDLASDVVADSAIAGDERRRVVECLDGLTDTQRQCIELAYYGGLTYAEVSQRLATNLSTIKSRMRDALRGLRNCLDAS</sequence>
<comment type="function">
    <text evidence="1">Sigma factors are initiation factors that promote the attachment of RNA polymerase to specific initiation sites and are then released. Extracytoplasmic function (ECF) sigma factors are held in an inactive form by an anti-sigma factor until released by regulated intramembrane proteolysis (By similarity).</text>
</comment>
<comment type="subunit">
    <text evidence="1">Interacts transiently with the RNA polymerase catalytic core formed by RpoA, RpoB, RpoC and RpoZ (2 alpha, 1 beta, 1 beta' and 1 omega subunit) to form the RNA polymerase holoenzyme that can initiate transcription. Interacts (via sigma-70 factor domain 4) with anti-sigma-K factor RskA (By similarity).</text>
</comment>
<comment type="domain">
    <text evidence="1">The sigma-70 factor domain-2 mediates sequence-specific interaction with the -10 element in promoter DNA, and plays an important role in melting the double-stranded DNA and the formation of the transcription bubble. The sigma-70 factor domain-2 mediates interaction with the RNA polymerase subunits RpoB and RpoC (By similarity).</text>
</comment>
<comment type="domain">
    <text evidence="1">The sigma-70 factor domain-4 contains a helix-turn-helix (H-T-H) motif that mediates interaction with the -35 element in promoter DNA. The domain also mediates interaction with the RNA polymerase subunit RpoA. Interactions between sigma-70 factor domain-4 and anti-sigma factors prevents interaction of sigma factors with the RNA polymerase catalytic core (By similarity).</text>
</comment>
<comment type="miscellaneous">
    <text evidence="1">Extracytoplasmic function (ECF) sigma factors are held in an inactive form by an anti-sigma factor until released by regulated intramembrane proteolysis (RIP). RIP occurs when an extracytoplasmic signal triggers a concerted proteolytic cascade to transmit information and elicit cellular responses. The membrane-spanning anti-sigma factor is first cut extracytoplasmically (site-1 protease, S1P), then within the membrane itself (site-2 protease, S2P, Rip1), while cytoplasmic proteases finish degrading the regulatory protein, liberating SigK (By similarity).</text>
</comment>
<comment type="similarity">
    <text evidence="2">Belongs to the sigma-70 factor family. ECF subfamily.</text>
</comment>
<accession>A0PNM4</accession>
<name>SIGK_MYCUA</name>